<comment type="similarity">
    <text evidence="4">Belongs to the calponin family.</text>
</comment>
<dbReference type="EMBL" id="AB031291">
    <property type="protein sequence ID" value="BAA83499.1"/>
    <property type="molecule type" value="mRNA"/>
</dbReference>
<dbReference type="EMBL" id="BC043027">
    <property type="protein sequence ID" value="AAH43027.1"/>
    <property type="molecule type" value="mRNA"/>
</dbReference>
<dbReference type="EMBL" id="BC055338">
    <property type="protein sequence ID" value="AAH55338.1"/>
    <property type="molecule type" value="mRNA"/>
</dbReference>
<dbReference type="CCDS" id="CCDS28200.1"/>
<dbReference type="RefSeq" id="NP_062728.1">
    <property type="nucleotide sequence ID" value="NM_019754.3"/>
</dbReference>
<dbReference type="SMR" id="Q9R1Q8"/>
<dbReference type="BioGRID" id="207932">
    <property type="interactions" value="5"/>
</dbReference>
<dbReference type="FunCoup" id="Q9R1Q8">
    <property type="interactions" value="104"/>
</dbReference>
<dbReference type="IntAct" id="Q9R1Q8">
    <property type="interactions" value="2"/>
</dbReference>
<dbReference type="STRING" id="10090.ENSMUSP00000093762"/>
<dbReference type="iPTMnet" id="Q9R1Q8"/>
<dbReference type="MetOSite" id="Q9R1Q8"/>
<dbReference type="PhosphoSitePlus" id="Q9R1Q8"/>
<dbReference type="SwissPalm" id="Q9R1Q8"/>
<dbReference type="jPOST" id="Q9R1Q8"/>
<dbReference type="PaxDb" id="10090-ENSMUSP00000093762"/>
<dbReference type="PeptideAtlas" id="Q9R1Q8"/>
<dbReference type="ProteomicsDB" id="262999"/>
<dbReference type="Pumba" id="Q9R1Q8"/>
<dbReference type="Antibodypedia" id="32456">
    <property type="antibodies" value="160 antibodies from 21 providers"/>
</dbReference>
<dbReference type="DNASU" id="56370"/>
<dbReference type="Ensembl" id="ENSMUST00000096057.5">
    <property type="protein sequence ID" value="ENSMUSP00000093762.5"/>
    <property type="gene ID" value="ENSMUSG00000022658.11"/>
</dbReference>
<dbReference type="GeneID" id="56370"/>
<dbReference type="KEGG" id="mmu:56370"/>
<dbReference type="UCSC" id="uc007ziw.1">
    <property type="organism name" value="mouse"/>
</dbReference>
<dbReference type="AGR" id="MGI:1926784"/>
<dbReference type="CTD" id="29114"/>
<dbReference type="MGI" id="MGI:1926784">
    <property type="gene designation" value="Tagln3"/>
</dbReference>
<dbReference type="VEuPathDB" id="HostDB:ENSMUSG00000022658"/>
<dbReference type="eggNOG" id="KOG2046">
    <property type="taxonomic scope" value="Eukaryota"/>
</dbReference>
<dbReference type="GeneTree" id="ENSGT00940000159385"/>
<dbReference type="HOGENOM" id="CLU_055232_1_0_1"/>
<dbReference type="InParanoid" id="Q9R1Q8"/>
<dbReference type="OMA" id="KWLMDGI"/>
<dbReference type="OrthoDB" id="21595at2759"/>
<dbReference type="PhylomeDB" id="Q9R1Q8"/>
<dbReference type="TreeFam" id="TF313921"/>
<dbReference type="BioGRID-ORCS" id="56370">
    <property type="hits" value="2 hits in 77 CRISPR screens"/>
</dbReference>
<dbReference type="CD-CODE" id="CE726F99">
    <property type="entry name" value="Postsynaptic density"/>
</dbReference>
<dbReference type="ChiTaRS" id="Tagln3">
    <property type="organism name" value="mouse"/>
</dbReference>
<dbReference type="PRO" id="PR:Q9R1Q8"/>
<dbReference type="Proteomes" id="UP000000589">
    <property type="component" value="Chromosome 16"/>
</dbReference>
<dbReference type="RNAct" id="Q9R1Q8">
    <property type="molecule type" value="protein"/>
</dbReference>
<dbReference type="Bgee" id="ENSMUSG00000022658">
    <property type="expression patterns" value="Expressed in dentate gyrus of hippocampal formation granule cell and 186 other cell types or tissues"/>
</dbReference>
<dbReference type="GO" id="GO:0043209">
    <property type="term" value="C:myelin sheath"/>
    <property type="evidence" value="ECO:0007005"/>
    <property type="project" value="UniProtKB"/>
</dbReference>
<dbReference type="GO" id="GO:0005634">
    <property type="term" value="C:nucleus"/>
    <property type="evidence" value="ECO:0000314"/>
    <property type="project" value="MGI"/>
</dbReference>
<dbReference type="GO" id="GO:0045202">
    <property type="term" value="C:synapse"/>
    <property type="evidence" value="ECO:0000314"/>
    <property type="project" value="SynGO"/>
</dbReference>
<dbReference type="GO" id="GO:0000122">
    <property type="term" value="P:negative regulation of transcription by RNA polymerase II"/>
    <property type="evidence" value="ECO:0000314"/>
    <property type="project" value="MGI"/>
</dbReference>
<dbReference type="CDD" id="cd21281">
    <property type="entry name" value="CH_TAGLN3"/>
    <property type="match status" value="1"/>
</dbReference>
<dbReference type="FunFam" id="1.10.418.10:FF:000039">
    <property type="entry name" value="Transgelin"/>
    <property type="match status" value="1"/>
</dbReference>
<dbReference type="Gene3D" id="1.10.418.10">
    <property type="entry name" value="Calponin-like domain"/>
    <property type="match status" value="1"/>
</dbReference>
<dbReference type="InterPro" id="IPR050606">
    <property type="entry name" value="Calponin-like"/>
</dbReference>
<dbReference type="InterPro" id="IPR000557">
    <property type="entry name" value="Calponin_repeat"/>
</dbReference>
<dbReference type="InterPro" id="IPR001715">
    <property type="entry name" value="CH_dom"/>
</dbReference>
<dbReference type="InterPro" id="IPR036872">
    <property type="entry name" value="CH_dom_sf"/>
</dbReference>
<dbReference type="InterPro" id="IPR003096">
    <property type="entry name" value="SM22_calponin"/>
</dbReference>
<dbReference type="PANTHER" id="PTHR47385">
    <property type="entry name" value="CALPONIN"/>
    <property type="match status" value="1"/>
</dbReference>
<dbReference type="PANTHER" id="PTHR47385:SF10">
    <property type="entry name" value="TRANSGELIN-3"/>
    <property type="match status" value="1"/>
</dbReference>
<dbReference type="Pfam" id="PF00402">
    <property type="entry name" value="Calponin"/>
    <property type="match status" value="1"/>
</dbReference>
<dbReference type="Pfam" id="PF00307">
    <property type="entry name" value="CH"/>
    <property type="match status" value="1"/>
</dbReference>
<dbReference type="PRINTS" id="PR00888">
    <property type="entry name" value="SM22CALPONIN"/>
</dbReference>
<dbReference type="PRINTS" id="PR00890">
    <property type="entry name" value="TRANSGELIN"/>
</dbReference>
<dbReference type="SMART" id="SM00033">
    <property type="entry name" value="CH"/>
    <property type="match status" value="1"/>
</dbReference>
<dbReference type="SUPFAM" id="SSF47576">
    <property type="entry name" value="Calponin-homology domain, CH-domain"/>
    <property type="match status" value="1"/>
</dbReference>
<dbReference type="PROSITE" id="PS01052">
    <property type="entry name" value="CALPONIN_1"/>
    <property type="match status" value="1"/>
</dbReference>
<dbReference type="PROSITE" id="PS51122">
    <property type="entry name" value="CALPONIN_2"/>
    <property type="match status" value="1"/>
</dbReference>
<dbReference type="PROSITE" id="PS50021">
    <property type="entry name" value="CH"/>
    <property type="match status" value="1"/>
</dbReference>
<keyword id="KW-0903">Direct protein sequencing</keyword>
<keyword id="KW-0597">Phosphoprotein</keyword>
<keyword id="KW-1185">Reference proteome</keyword>
<protein>
    <recommendedName>
        <fullName>Transgelin-3</fullName>
    </recommendedName>
    <alternativeName>
        <fullName>Neuronal protein NP25</fullName>
    </alternativeName>
</protein>
<sequence>MANRGPSYGLSREVQEKIEQKYDADLENKLVDWIILQCAEDIEHPPPGRAHFQKWLMDGTVLCKLINSLYPPGQEPIPKISESKMAFKQMEQISQFLKAAEVYGVRTTDIFQTVDLWEGKDMAAVQRTLMALGSVAVTKDDGCYRGEPSWFHRKAQQNRRGFSEEQLRQGQNVIGLQMGSNKGASQAGMTGYGMPRQIM</sequence>
<accession>Q9R1Q8</accession>
<proteinExistence type="evidence at protein level"/>
<reference key="1">
    <citation type="submission" date="1999-08" db="EMBL/GenBank/DDBJ databases">
        <title>Mouse neuronal protein (NP25).</title>
        <authorList>
            <person name="Hayashi A."/>
            <person name="Hattori A."/>
            <person name="Okaze H."/>
            <person name="Kozuma S."/>
            <person name="Seki N."/>
            <person name="Saito T."/>
        </authorList>
    </citation>
    <scope>NUCLEOTIDE SEQUENCE [MRNA]</scope>
</reference>
<reference key="2">
    <citation type="journal article" date="2004" name="Genome Res.">
        <title>The status, quality, and expansion of the NIH full-length cDNA project: the Mammalian Gene Collection (MGC).</title>
        <authorList>
            <consortium name="The MGC Project Team"/>
        </authorList>
    </citation>
    <scope>NUCLEOTIDE SEQUENCE [LARGE SCALE MRNA]</scope>
    <source>
        <strain>C57BL/6J</strain>
        <tissue>Brain</tissue>
    </source>
</reference>
<reference key="3">
    <citation type="submission" date="2007-03" db="UniProtKB">
        <authorList>
            <person name="Lubec G."/>
            <person name="Klug S."/>
        </authorList>
    </citation>
    <scope>PROTEIN SEQUENCE OF 30-49 AND 65-79</scope>
    <scope>IDENTIFICATION BY MASS SPECTROMETRY</scope>
    <source>
        <tissue>Hippocampus</tissue>
    </source>
</reference>
<reference key="4">
    <citation type="journal article" date="2010" name="Cell">
        <title>A tissue-specific atlas of mouse protein phosphorylation and expression.</title>
        <authorList>
            <person name="Huttlin E.L."/>
            <person name="Jedrychowski M.P."/>
            <person name="Elias J.E."/>
            <person name="Goswami T."/>
            <person name="Rad R."/>
            <person name="Beausoleil S.A."/>
            <person name="Villen J."/>
            <person name="Haas W."/>
            <person name="Sowa M.E."/>
            <person name="Gygi S.P."/>
        </authorList>
    </citation>
    <scope>IDENTIFICATION BY MASS SPECTROMETRY [LARGE SCALE ANALYSIS]</scope>
    <source>
        <tissue>Brain</tissue>
    </source>
</reference>
<name>TAGL3_MOUSE</name>
<evidence type="ECO:0000250" key="1">
    <source>
        <dbReference type="UniProtKB" id="P37805"/>
    </source>
</evidence>
<evidence type="ECO:0000255" key="2">
    <source>
        <dbReference type="PROSITE-ProRule" id="PRU00044"/>
    </source>
</evidence>
<evidence type="ECO:0000256" key="3">
    <source>
        <dbReference type="SAM" id="MobiDB-lite"/>
    </source>
</evidence>
<evidence type="ECO:0000305" key="4"/>
<feature type="chain" id="PRO_0000204789" description="Transgelin-3">
    <location>
        <begin position="1"/>
        <end position="199"/>
    </location>
</feature>
<feature type="domain" description="Calponin-homology (CH)" evidence="2">
    <location>
        <begin position="24"/>
        <end position="136"/>
    </location>
</feature>
<feature type="repeat" description="Calponin-like">
    <location>
        <begin position="174"/>
        <end position="199"/>
    </location>
</feature>
<feature type="region of interest" description="Disordered" evidence="3">
    <location>
        <begin position="178"/>
        <end position="199"/>
    </location>
</feature>
<feature type="compositionally biased region" description="Polar residues" evidence="3">
    <location>
        <begin position="178"/>
        <end position="188"/>
    </location>
</feature>
<feature type="modified residue" description="Phosphoserine" evidence="1">
    <location>
        <position position="163"/>
    </location>
</feature>
<gene>
    <name type="primary">Tagln3</name>
    <name type="synonym">Np25</name>
</gene>
<organism>
    <name type="scientific">Mus musculus</name>
    <name type="common">Mouse</name>
    <dbReference type="NCBI Taxonomy" id="10090"/>
    <lineage>
        <taxon>Eukaryota</taxon>
        <taxon>Metazoa</taxon>
        <taxon>Chordata</taxon>
        <taxon>Craniata</taxon>
        <taxon>Vertebrata</taxon>
        <taxon>Euteleostomi</taxon>
        <taxon>Mammalia</taxon>
        <taxon>Eutheria</taxon>
        <taxon>Euarchontoglires</taxon>
        <taxon>Glires</taxon>
        <taxon>Rodentia</taxon>
        <taxon>Myomorpha</taxon>
        <taxon>Muroidea</taxon>
        <taxon>Muridae</taxon>
        <taxon>Murinae</taxon>
        <taxon>Mus</taxon>
        <taxon>Mus</taxon>
    </lineage>
</organism>